<accession>Q0HYN8</accession>
<sequence length="361" mass="40454">MLNINIEKQLGQLQLKVNTQLPLQGVTAVFGRSGAGKTSLVNLLGGLTTPDKGEISLGDTLLFKHKTVNLPPEKRRIGYVFQEARLFPHYSVNGNLTYGMRHKTPELFDKVVSLLGIEKLLSRYPSTLSGGEKQRVAIGRALLTSPQMLLMDEPLASLDLPRKRELLPYLQTLAQELKLPIVYVSHSLDEILQLADHMLVLHQGKMIAQGPLTQVWNSEQMRPWVPLQELSSLLSARIADRHPDYPMTRLLMDDGNQLWVSGQLPPTHKQLKVRIQANHVSVCTEEPKGSSVRNLLRGKIKELYPSDNGEQIQLKIALGKDELWANITPWARDELQLIPGKAIYAQIKGVTMTQMDIAESH</sequence>
<comment type="function">
    <text evidence="1">Part of the ABC transporter complex ModABC involved in molybdenum import. Responsible for energy coupling to the transport system.</text>
</comment>
<comment type="catalytic activity">
    <reaction evidence="1">
        <text>molybdate(out) + ATP + H2O = molybdate(in) + ADP + phosphate + H(+)</text>
        <dbReference type="Rhea" id="RHEA:22020"/>
        <dbReference type="ChEBI" id="CHEBI:15377"/>
        <dbReference type="ChEBI" id="CHEBI:15378"/>
        <dbReference type="ChEBI" id="CHEBI:30616"/>
        <dbReference type="ChEBI" id="CHEBI:36264"/>
        <dbReference type="ChEBI" id="CHEBI:43474"/>
        <dbReference type="ChEBI" id="CHEBI:456216"/>
        <dbReference type="EC" id="7.3.2.5"/>
    </reaction>
</comment>
<comment type="subunit">
    <text evidence="1">The complex is composed of two ATP-binding proteins (ModC), two transmembrane proteins (ModB) and a solute-binding protein (ModA).</text>
</comment>
<comment type="subcellular location">
    <subcellularLocation>
        <location evidence="1">Cell inner membrane</location>
        <topology evidence="1">Peripheral membrane protein</topology>
    </subcellularLocation>
</comment>
<comment type="similarity">
    <text evidence="1">Belongs to the ABC transporter superfamily. Molybdate importer (TC 3.A.1.8) family.</text>
</comment>
<protein>
    <recommendedName>
        <fullName evidence="1">Molybdenum import ATP-binding protein ModC</fullName>
        <ecNumber evidence="1">7.3.2.5</ecNumber>
    </recommendedName>
</protein>
<organism>
    <name type="scientific">Shewanella sp. (strain MR-7)</name>
    <dbReference type="NCBI Taxonomy" id="60481"/>
    <lineage>
        <taxon>Bacteria</taxon>
        <taxon>Pseudomonadati</taxon>
        <taxon>Pseudomonadota</taxon>
        <taxon>Gammaproteobacteria</taxon>
        <taxon>Alteromonadales</taxon>
        <taxon>Shewanellaceae</taxon>
        <taxon>Shewanella</taxon>
    </lineage>
</organism>
<feature type="chain" id="PRO_0000271692" description="Molybdenum import ATP-binding protein ModC">
    <location>
        <begin position="1"/>
        <end position="361"/>
    </location>
</feature>
<feature type="domain" description="ABC transporter" evidence="1">
    <location>
        <begin position="1"/>
        <end position="228"/>
    </location>
</feature>
<feature type="domain" description="Mop" evidence="2">
    <location>
        <begin position="289"/>
        <end position="356"/>
    </location>
</feature>
<feature type="binding site" evidence="1">
    <location>
        <begin position="31"/>
        <end position="38"/>
    </location>
    <ligand>
        <name>ATP</name>
        <dbReference type="ChEBI" id="CHEBI:30616"/>
    </ligand>
</feature>
<gene>
    <name evidence="1" type="primary">modC</name>
    <name type="ordered locus">Shewmr7_0767</name>
</gene>
<evidence type="ECO:0000255" key="1">
    <source>
        <dbReference type="HAMAP-Rule" id="MF_01705"/>
    </source>
</evidence>
<evidence type="ECO:0000255" key="2">
    <source>
        <dbReference type="PROSITE-ProRule" id="PRU01213"/>
    </source>
</evidence>
<proteinExistence type="inferred from homology"/>
<reference key="1">
    <citation type="submission" date="2006-08" db="EMBL/GenBank/DDBJ databases">
        <title>Complete sequence of chromosome 1 of Shewanella sp. MR-7.</title>
        <authorList>
            <person name="Copeland A."/>
            <person name="Lucas S."/>
            <person name="Lapidus A."/>
            <person name="Barry K."/>
            <person name="Detter J.C."/>
            <person name="Glavina del Rio T."/>
            <person name="Hammon N."/>
            <person name="Israni S."/>
            <person name="Dalin E."/>
            <person name="Tice H."/>
            <person name="Pitluck S."/>
            <person name="Kiss H."/>
            <person name="Brettin T."/>
            <person name="Bruce D."/>
            <person name="Han C."/>
            <person name="Tapia R."/>
            <person name="Gilna P."/>
            <person name="Schmutz J."/>
            <person name="Larimer F."/>
            <person name="Land M."/>
            <person name="Hauser L."/>
            <person name="Kyrpides N."/>
            <person name="Mikhailova N."/>
            <person name="Nealson K."/>
            <person name="Konstantinidis K."/>
            <person name="Klappenbach J."/>
            <person name="Tiedje J."/>
            <person name="Richardson P."/>
        </authorList>
    </citation>
    <scope>NUCLEOTIDE SEQUENCE [LARGE SCALE GENOMIC DNA]</scope>
    <source>
        <strain>MR-7</strain>
    </source>
</reference>
<dbReference type="EC" id="7.3.2.5" evidence="1"/>
<dbReference type="EMBL" id="CP000444">
    <property type="protein sequence ID" value="ABI41767.1"/>
    <property type="molecule type" value="Genomic_DNA"/>
</dbReference>
<dbReference type="SMR" id="Q0HYN8"/>
<dbReference type="KEGG" id="shm:Shewmr7_0767"/>
<dbReference type="HOGENOM" id="CLU_000604_1_1_6"/>
<dbReference type="GO" id="GO:0005886">
    <property type="term" value="C:plasma membrane"/>
    <property type="evidence" value="ECO:0007669"/>
    <property type="project" value="UniProtKB-SubCell"/>
</dbReference>
<dbReference type="GO" id="GO:0015412">
    <property type="term" value="F:ABC-type molybdate transporter activity"/>
    <property type="evidence" value="ECO:0007669"/>
    <property type="project" value="UniProtKB-EC"/>
</dbReference>
<dbReference type="GO" id="GO:0005524">
    <property type="term" value="F:ATP binding"/>
    <property type="evidence" value="ECO:0007669"/>
    <property type="project" value="UniProtKB-KW"/>
</dbReference>
<dbReference type="GO" id="GO:0016887">
    <property type="term" value="F:ATP hydrolysis activity"/>
    <property type="evidence" value="ECO:0007669"/>
    <property type="project" value="InterPro"/>
</dbReference>
<dbReference type="FunFam" id="3.40.50.300:FF:000634">
    <property type="entry name" value="Molybdenum import ATP-binding protein ModC"/>
    <property type="match status" value="1"/>
</dbReference>
<dbReference type="Gene3D" id="2.40.50.100">
    <property type="match status" value="1"/>
</dbReference>
<dbReference type="Gene3D" id="3.40.50.300">
    <property type="entry name" value="P-loop containing nucleotide triphosphate hydrolases"/>
    <property type="match status" value="1"/>
</dbReference>
<dbReference type="InterPro" id="IPR003593">
    <property type="entry name" value="AAA+_ATPase"/>
</dbReference>
<dbReference type="InterPro" id="IPR003439">
    <property type="entry name" value="ABC_transporter-like_ATP-bd"/>
</dbReference>
<dbReference type="InterPro" id="IPR017871">
    <property type="entry name" value="ABC_transporter-like_CS"/>
</dbReference>
<dbReference type="InterPro" id="IPR008995">
    <property type="entry name" value="Mo/tungstate-bd_C_term_dom"/>
</dbReference>
<dbReference type="InterPro" id="IPR011868">
    <property type="entry name" value="ModC_ABC_ATP-bd"/>
</dbReference>
<dbReference type="InterPro" id="IPR050334">
    <property type="entry name" value="Molybdenum_import_ModC"/>
</dbReference>
<dbReference type="InterPro" id="IPR004606">
    <property type="entry name" value="Mop_domain"/>
</dbReference>
<dbReference type="InterPro" id="IPR027417">
    <property type="entry name" value="P-loop_NTPase"/>
</dbReference>
<dbReference type="InterPro" id="IPR005116">
    <property type="entry name" value="Transp-assoc_OB_typ1"/>
</dbReference>
<dbReference type="NCBIfam" id="TIGR02142">
    <property type="entry name" value="modC_ABC"/>
    <property type="match status" value="1"/>
</dbReference>
<dbReference type="NCBIfam" id="NF008355">
    <property type="entry name" value="PRK11144.1"/>
    <property type="match status" value="1"/>
</dbReference>
<dbReference type="PANTHER" id="PTHR43514">
    <property type="entry name" value="ABC TRANSPORTER I FAMILY MEMBER 10"/>
    <property type="match status" value="1"/>
</dbReference>
<dbReference type="PANTHER" id="PTHR43514:SF4">
    <property type="entry name" value="ABC TRANSPORTER I FAMILY MEMBER 10"/>
    <property type="match status" value="1"/>
</dbReference>
<dbReference type="Pfam" id="PF00005">
    <property type="entry name" value="ABC_tran"/>
    <property type="match status" value="1"/>
</dbReference>
<dbReference type="Pfam" id="PF03459">
    <property type="entry name" value="TOBE"/>
    <property type="match status" value="1"/>
</dbReference>
<dbReference type="SMART" id="SM00382">
    <property type="entry name" value="AAA"/>
    <property type="match status" value="1"/>
</dbReference>
<dbReference type="SUPFAM" id="SSF50331">
    <property type="entry name" value="MOP-like"/>
    <property type="match status" value="1"/>
</dbReference>
<dbReference type="SUPFAM" id="SSF52540">
    <property type="entry name" value="P-loop containing nucleoside triphosphate hydrolases"/>
    <property type="match status" value="1"/>
</dbReference>
<dbReference type="PROSITE" id="PS00211">
    <property type="entry name" value="ABC_TRANSPORTER_1"/>
    <property type="match status" value="1"/>
</dbReference>
<dbReference type="PROSITE" id="PS50893">
    <property type="entry name" value="ABC_TRANSPORTER_2"/>
    <property type="match status" value="1"/>
</dbReference>
<dbReference type="PROSITE" id="PS51241">
    <property type="entry name" value="MODC"/>
    <property type="match status" value="1"/>
</dbReference>
<dbReference type="PROSITE" id="PS51866">
    <property type="entry name" value="MOP"/>
    <property type="match status" value="1"/>
</dbReference>
<name>MODC_SHESR</name>
<keyword id="KW-0067">ATP-binding</keyword>
<keyword id="KW-0997">Cell inner membrane</keyword>
<keyword id="KW-1003">Cell membrane</keyword>
<keyword id="KW-0472">Membrane</keyword>
<keyword id="KW-0500">Molybdenum</keyword>
<keyword id="KW-0547">Nucleotide-binding</keyword>
<keyword id="KW-1278">Translocase</keyword>
<keyword id="KW-0813">Transport</keyword>